<feature type="chain" id="PRO_1000116323" description="Argininosuccinate lyase">
    <location>
        <begin position="1"/>
        <end position="457"/>
    </location>
</feature>
<gene>
    <name evidence="1" type="primary">argH</name>
    <name type="ordered locus">ECED1_4665</name>
</gene>
<name>ARLY_ECO81</name>
<evidence type="ECO:0000255" key="1">
    <source>
        <dbReference type="HAMAP-Rule" id="MF_00006"/>
    </source>
</evidence>
<comment type="catalytic activity">
    <reaction evidence="1">
        <text>2-(N(omega)-L-arginino)succinate = fumarate + L-arginine</text>
        <dbReference type="Rhea" id="RHEA:24020"/>
        <dbReference type="ChEBI" id="CHEBI:29806"/>
        <dbReference type="ChEBI" id="CHEBI:32682"/>
        <dbReference type="ChEBI" id="CHEBI:57472"/>
        <dbReference type="EC" id="4.3.2.1"/>
    </reaction>
</comment>
<comment type="pathway">
    <text evidence="1">Amino-acid biosynthesis; L-arginine biosynthesis; L-arginine from L-ornithine and carbamoyl phosphate: step 3/3.</text>
</comment>
<comment type="subcellular location">
    <subcellularLocation>
        <location evidence="1">Cytoplasm</location>
    </subcellularLocation>
</comment>
<comment type="similarity">
    <text evidence="1">Belongs to the lyase 1 family. Argininosuccinate lyase subfamily.</text>
</comment>
<keyword id="KW-0028">Amino-acid biosynthesis</keyword>
<keyword id="KW-0055">Arginine biosynthesis</keyword>
<keyword id="KW-0963">Cytoplasm</keyword>
<keyword id="KW-0456">Lyase</keyword>
<accession>B7MR51</accession>
<organism>
    <name type="scientific">Escherichia coli O81 (strain ED1a)</name>
    <dbReference type="NCBI Taxonomy" id="585397"/>
    <lineage>
        <taxon>Bacteria</taxon>
        <taxon>Pseudomonadati</taxon>
        <taxon>Pseudomonadota</taxon>
        <taxon>Gammaproteobacteria</taxon>
        <taxon>Enterobacterales</taxon>
        <taxon>Enterobacteriaceae</taxon>
        <taxon>Escherichia</taxon>
    </lineage>
</organism>
<dbReference type="EC" id="4.3.2.1" evidence="1"/>
<dbReference type="EMBL" id="CU928162">
    <property type="protein sequence ID" value="CAR10635.1"/>
    <property type="molecule type" value="Genomic_DNA"/>
</dbReference>
<dbReference type="RefSeq" id="WP_001230079.1">
    <property type="nucleotide sequence ID" value="NC_011745.1"/>
</dbReference>
<dbReference type="SMR" id="B7MR51"/>
<dbReference type="KEGG" id="ecq:ECED1_4665"/>
<dbReference type="HOGENOM" id="CLU_027272_2_3_6"/>
<dbReference type="UniPathway" id="UPA00068">
    <property type="reaction ID" value="UER00114"/>
</dbReference>
<dbReference type="Proteomes" id="UP000000748">
    <property type="component" value="Chromosome"/>
</dbReference>
<dbReference type="GO" id="GO:0005829">
    <property type="term" value="C:cytosol"/>
    <property type="evidence" value="ECO:0007669"/>
    <property type="project" value="TreeGrafter"/>
</dbReference>
<dbReference type="GO" id="GO:0004056">
    <property type="term" value="F:argininosuccinate lyase activity"/>
    <property type="evidence" value="ECO:0007669"/>
    <property type="project" value="UniProtKB-UniRule"/>
</dbReference>
<dbReference type="GO" id="GO:0042450">
    <property type="term" value="P:arginine biosynthetic process via ornithine"/>
    <property type="evidence" value="ECO:0007669"/>
    <property type="project" value="InterPro"/>
</dbReference>
<dbReference type="GO" id="GO:0006526">
    <property type="term" value="P:L-arginine biosynthetic process"/>
    <property type="evidence" value="ECO:0007669"/>
    <property type="project" value="UniProtKB-UniRule"/>
</dbReference>
<dbReference type="CDD" id="cd01359">
    <property type="entry name" value="Argininosuccinate_lyase"/>
    <property type="match status" value="1"/>
</dbReference>
<dbReference type="FunFam" id="1.10.275.10:FF:000004">
    <property type="entry name" value="Argininosuccinate lyase"/>
    <property type="match status" value="1"/>
</dbReference>
<dbReference type="FunFam" id="1.10.40.30:FF:000001">
    <property type="entry name" value="Argininosuccinate lyase"/>
    <property type="match status" value="1"/>
</dbReference>
<dbReference type="FunFam" id="1.20.200.10:FF:000006">
    <property type="entry name" value="Argininosuccinate lyase"/>
    <property type="match status" value="1"/>
</dbReference>
<dbReference type="Gene3D" id="1.10.40.30">
    <property type="entry name" value="Fumarase/aspartase (C-terminal domain)"/>
    <property type="match status" value="1"/>
</dbReference>
<dbReference type="Gene3D" id="1.20.200.10">
    <property type="entry name" value="Fumarase/aspartase (Central domain)"/>
    <property type="match status" value="1"/>
</dbReference>
<dbReference type="Gene3D" id="1.10.275.10">
    <property type="entry name" value="Fumarase/aspartase (N-terminal domain)"/>
    <property type="match status" value="1"/>
</dbReference>
<dbReference type="HAMAP" id="MF_00006">
    <property type="entry name" value="Arg_succ_lyase"/>
    <property type="match status" value="1"/>
</dbReference>
<dbReference type="InterPro" id="IPR029419">
    <property type="entry name" value="Arg_succ_lyase_C"/>
</dbReference>
<dbReference type="InterPro" id="IPR009049">
    <property type="entry name" value="Argininosuccinate_lyase"/>
</dbReference>
<dbReference type="InterPro" id="IPR024083">
    <property type="entry name" value="Fumarase/histidase_N"/>
</dbReference>
<dbReference type="InterPro" id="IPR020557">
    <property type="entry name" value="Fumarate_lyase_CS"/>
</dbReference>
<dbReference type="InterPro" id="IPR000362">
    <property type="entry name" value="Fumarate_lyase_fam"/>
</dbReference>
<dbReference type="InterPro" id="IPR022761">
    <property type="entry name" value="Fumarate_lyase_N"/>
</dbReference>
<dbReference type="InterPro" id="IPR008948">
    <property type="entry name" value="L-Aspartase-like"/>
</dbReference>
<dbReference type="NCBIfam" id="TIGR00838">
    <property type="entry name" value="argH"/>
    <property type="match status" value="1"/>
</dbReference>
<dbReference type="NCBIfam" id="NF008964">
    <property type="entry name" value="PRK12308.1"/>
    <property type="match status" value="1"/>
</dbReference>
<dbReference type="PANTHER" id="PTHR43814">
    <property type="entry name" value="ARGININOSUCCINATE LYASE"/>
    <property type="match status" value="1"/>
</dbReference>
<dbReference type="PANTHER" id="PTHR43814:SF1">
    <property type="entry name" value="ARGININOSUCCINATE LYASE"/>
    <property type="match status" value="1"/>
</dbReference>
<dbReference type="Pfam" id="PF14698">
    <property type="entry name" value="ASL_C2"/>
    <property type="match status" value="1"/>
</dbReference>
<dbReference type="Pfam" id="PF00206">
    <property type="entry name" value="Lyase_1"/>
    <property type="match status" value="1"/>
</dbReference>
<dbReference type="PRINTS" id="PR00145">
    <property type="entry name" value="ARGSUCLYASE"/>
</dbReference>
<dbReference type="PRINTS" id="PR00149">
    <property type="entry name" value="FUMRATELYASE"/>
</dbReference>
<dbReference type="SUPFAM" id="SSF48557">
    <property type="entry name" value="L-aspartase-like"/>
    <property type="match status" value="1"/>
</dbReference>
<dbReference type="PROSITE" id="PS00163">
    <property type="entry name" value="FUMARATE_LYASES"/>
    <property type="match status" value="1"/>
</dbReference>
<reference key="1">
    <citation type="journal article" date="2009" name="PLoS Genet.">
        <title>Organised genome dynamics in the Escherichia coli species results in highly diverse adaptive paths.</title>
        <authorList>
            <person name="Touchon M."/>
            <person name="Hoede C."/>
            <person name="Tenaillon O."/>
            <person name="Barbe V."/>
            <person name="Baeriswyl S."/>
            <person name="Bidet P."/>
            <person name="Bingen E."/>
            <person name="Bonacorsi S."/>
            <person name="Bouchier C."/>
            <person name="Bouvet O."/>
            <person name="Calteau A."/>
            <person name="Chiapello H."/>
            <person name="Clermont O."/>
            <person name="Cruveiller S."/>
            <person name="Danchin A."/>
            <person name="Diard M."/>
            <person name="Dossat C."/>
            <person name="Karoui M.E."/>
            <person name="Frapy E."/>
            <person name="Garry L."/>
            <person name="Ghigo J.M."/>
            <person name="Gilles A.M."/>
            <person name="Johnson J."/>
            <person name="Le Bouguenec C."/>
            <person name="Lescat M."/>
            <person name="Mangenot S."/>
            <person name="Martinez-Jehanne V."/>
            <person name="Matic I."/>
            <person name="Nassif X."/>
            <person name="Oztas S."/>
            <person name="Petit M.A."/>
            <person name="Pichon C."/>
            <person name="Rouy Z."/>
            <person name="Ruf C.S."/>
            <person name="Schneider D."/>
            <person name="Tourret J."/>
            <person name="Vacherie B."/>
            <person name="Vallenet D."/>
            <person name="Medigue C."/>
            <person name="Rocha E.P.C."/>
            <person name="Denamur E."/>
        </authorList>
    </citation>
    <scope>NUCLEOTIDE SEQUENCE [LARGE SCALE GENOMIC DNA]</scope>
    <source>
        <strain>ED1a</strain>
    </source>
</reference>
<sequence>MALWGGRFTQAADQRFKQFNDSLRFDYRLAEQDIVGSVAWSKALVTVGVLTAEEQAQLEEALNVLLEDVRARPQQILESDAEDIHSWVEGKLIDKVGQLGKKLHTGRSRNDQVATDLKLWCKDTVSELLTANRQLQSALVETAQNNQDAVMPGYTHLQRAQPVTFAHWCLAYVEMLARDESRLQDALKRLDVSPLGCGALAGTAYEIDREQLAGWLGFASATRNSLDSVSDRDHVLELLSAAAIGMVHLSRFAEDLIFFNTGEAGFVELSDRVTSGSSLMPQKKNPDALELIRGKCGRVQGALTGMMMTLKGLPLAYNKDMQEDKEGLFDALDTWLDCLHMAALVLDGIQVKRPRCQEAAQQGYANATELADYLVAKGVPFREAHHIVGEAVVEAIRQGKALEDLPLSELQKFSQVIGEDVYPILSLQSCLDKRAAKGGVSPQQVAQAIAFAQARLG</sequence>
<protein>
    <recommendedName>
        <fullName evidence="1">Argininosuccinate lyase</fullName>
        <shortName evidence="1">ASAL</shortName>
        <ecNumber evidence="1">4.3.2.1</ecNumber>
    </recommendedName>
    <alternativeName>
        <fullName evidence="1">Arginosuccinase</fullName>
    </alternativeName>
</protein>
<proteinExistence type="inferred from homology"/>